<comment type="function">
    <text evidence="1">An accessory protein needed during the final step in the assembly of 30S ribosomal subunit, possibly for assembly of the head region. Essential for efficient processing of 16S rRNA. May be needed both before and after RbfA during the maturation of 16S rRNA. It has affinity for free ribosomal 30S subunits but not for 70S ribosomes.</text>
</comment>
<comment type="subunit">
    <text evidence="1">Binds ribosomal protein uS19.</text>
</comment>
<comment type="subcellular location">
    <subcellularLocation>
        <location evidence="1">Cytoplasm</location>
    </subcellularLocation>
</comment>
<comment type="domain">
    <text evidence="1">The PRC barrel domain binds ribosomal protein uS19.</text>
</comment>
<comment type="similarity">
    <text evidence="1">Belongs to the RimM family.</text>
</comment>
<evidence type="ECO:0000255" key="1">
    <source>
        <dbReference type="HAMAP-Rule" id="MF_00014"/>
    </source>
</evidence>
<name>RIMM_BURA4</name>
<dbReference type="EMBL" id="CP001025">
    <property type="protein sequence ID" value="ACB63441.1"/>
    <property type="molecule type" value="Genomic_DNA"/>
</dbReference>
<dbReference type="RefSeq" id="WP_012363363.1">
    <property type="nucleotide sequence ID" value="NC_010551.1"/>
</dbReference>
<dbReference type="SMR" id="B1YV58"/>
<dbReference type="KEGG" id="bac:BamMC406_0950"/>
<dbReference type="HOGENOM" id="CLU_077636_1_0_4"/>
<dbReference type="OrthoDB" id="9783509at2"/>
<dbReference type="Proteomes" id="UP000001680">
    <property type="component" value="Chromosome 1"/>
</dbReference>
<dbReference type="GO" id="GO:0005737">
    <property type="term" value="C:cytoplasm"/>
    <property type="evidence" value="ECO:0007669"/>
    <property type="project" value="UniProtKB-SubCell"/>
</dbReference>
<dbReference type="GO" id="GO:0005840">
    <property type="term" value="C:ribosome"/>
    <property type="evidence" value="ECO:0007669"/>
    <property type="project" value="InterPro"/>
</dbReference>
<dbReference type="GO" id="GO:0043022">
    <property type="term" value="F:ribosome binding"/>
    <property type="evidence" value="ECO:0007669"/>
    <property type="project" value="InterPro"/>
</dbReference>
<dbReference type="GO" id="GO:0042274">
    <property type="term" value="P:ribosomal small subunit biogenesis"/>
    <property type="evidence" value="ECO:0007669"/>
    <property type="project" value="UniProtKB-UniRule"/>
</dbReference>
<dbReference type="GO" id="GO:0006364">
    <property type="term" value="P:rRNA processing"/>
    <property type="evidence" value="ECO:0007669"/>
    <property type="project" value="UniProtKB-UniRule"/>
</dbReference>
<dbReference type="Gene3D" id="2.30.30.240">
    <property type="entry name" value="PRC-barrel domain"/>
    <property type="match status" value="1"/>
</dbReference>
<dbReference type="Gene3D" id="2.40.30.60">
    <property type="entry name" value="RimM"/>
    <property type="match status" value="1"/>
</dbReference>
<dbReference type="HAMAP" id="MF_00014">
    <property type="entry name" value="Ribosome_mat_RimM"/>
    <property type="match status" value="1"/>
</dbReference>
<dbReference type="InterPro" id="IPR011033">
    <property type="entry name" value="PRC_barrel-like_sf"/>
</dbReference>
<dbReference type="InterPro" id="IPR056792">
    <property type="entry name" value="PRC_RimM"/>
</dbReference>
<dbReference type="InterPro" id="IPR011961">
    <property type="entry name" value="RimM"/>
</dbReference>
<dbReference type="InterPro" id="IPR002676">
    <property type="entry name" value="RimM_N"/>
</dbReference>
<dbReference type="InterPro" id="IPR036976">
    <property type="entry name" value="RimM_N_sf"/>
</dbReference>
<dbReference type="InterPro" id="IPR009000">
    <property type="entry name" value="Transl_B-barrel_sf"/>
</dbReference>
<dbReference type="NCBIfam" id="TIGR02273">
    <property type="entry name" value="16S_RimM"/>
    <property type="match status" value="1"/>
</dbReference>
<dbReference type="PANTHER" id="PTHR33692">
    <property type="entry name" value="RIBOSOME MATURATION FACTOR RIMM"/>
    <property type="match status" value="1"/>
</dbReference>
<dbReference type="PANTHER" id="PTHR33692:SF1">
    <property type="entry name" value="RIBOSOME MATURATION FACTOR RIMM"/>
    <property type="match status" value="1"/>
</dbReference>
<dbReference type="Pfam" id="PF24986">
    <property type="entry name" value="PRC_RimM"/>
    <property type="match status" value="1"/>
</dbReference>
<dbReference type="Pfam" id="PF01782">
    <property type="entry name" value="RimM"/>
    <property type="match status" value="1"/>
</dbReference>
<dbReference type="SUPFAM" id="SSF50346">
    <property type="entry name" value="PRC-barrel domain"/>
    <property type="match status" value="1"/>
</dbReference>
<dbReference type="SUPFAM" id="SSF50447">
    <property type="entry name" value="Translation proteins"/>
    <property type="match status" value="1"/>
</dbReference>
<sequence length="225" mass="24347">MSGHDSGNAKRGRASFGAFVRKPVERDVVASAGEAAEQGSLEAVQAWPDDAVEVGAVVDAYGLKGWIKVATHADAGRGGDALLDARRWWLERGGERLSARILQSKTHGDTVVAHAAGVSDRDAALALRGFRVFVRREDFPELAADEFYWVDLIGLEVVNEQSVALGTVSGMIDNGVHSIMRVEYPAVGKDGQPTTDERLIPFVGVYVKTVDQAARRIVVDWEADY</sequence>
<reference key="1">
    <citation type="submission" date="2008-04" db="EMBL/GenBank/DDBJ databases">
        <title>Complete sequence of chromosome 1 of Burkholderia ambifaria MC40-6.</title>
        <authorList>
            <person name="Copeland A."/>
            <person name="Lucas S."/>
            <person name="Lapidus A."/>
            <person name="Glavina del Rio T."/>
            <person name="Dalin E."/>
            <person name="Tice H."/>
            <person name="Pitluck S."/>
            <person name="Chain P."/>
            <person name="Malfatti S."/>
            <person name="Shin M."/>
            <person name="Vergez L."/>
            <person name="Lang D."/>
            <person name="Schmutz J."/>
            <person name="Larimer F."/>
            <person name="Land M."/>
            <person name="Hauser L."/>
            <person name="Kyrpides N."/>
            <person name="Lykidis A."/>
            <person name="Ramette A."/>
            <person name="Konstantinidis K."/>
            <person name="Tiedje J."/>
            <person name="Richardson P."/>
        </authorList>
    </citation>
    <scope>NUCLEOTIDE SEQUENCE [LARGE SCALE GENOMIC DNA]</scope>
    <source>
        <strain>MC40-6</strain>
    </source>
</reference>
<proteinExistence type="inferred from homology"/>
<feature type="chain" id="PRO_0000351728" description="Ribosome maturation factor RimM">
    <location>
        <begin position="1"/>
        <end position="225"/>
    </location>
</feature>
<feature type="domain" description="PRC barrel" evidence="1">
    <location>
        <begin position="144"/>
        <end position="225"/>
    </location>
</feature>
<protein>
    <recommendedName>
        <fullName evidence="1">Ribosome maturation factor RimM</fullName>
    </recommendedName>
</protein>
<organism>
    <name type="scientific">Burkholderia ambifaria (strain MC40-6)</name>
    <dbReference type="NCBI Taxonomy" id="398577"/>
    <lineage>
        <taxon>Bacteria</taxon>
        <taxon>Pseudomonadati</taxon>
        <taxon>Pseudomonadota</taxon>
        <taxon>Betaproteobacteria</taxon>
        <taxon>Burkholderiales</taxon>
        <taxon>Burkholderiaceae</taxon>
        <taxon>Burkholderia</taxon>
        <taxon>Burkholderia cepacia complex</taxon>
    </lineage>
</organism>
<accession>B1YV58</accession>
<keyword id="KW-0143">Chaperone</keyword>
<keyword id="KW-0963">Cytoplasm</keyword>
<keyword id="KW-0690">Ribosome biogenesis</keyword>
<keyword id="KW-0698">rRNA processing</keyword>
<gene>
    <name evidence="1" type="primary">rimM</name>
    <name type="ordered locus">BamMC406_0950</name>
</gene>